<keyword id="KW-1185">Reference proteome</keyword>
<name>Y286_METMP</name>
<reference key="1">
    <citation type="journal article" date="2004" name="J. Bacteriol.">
        <title>Complete genome sequence of the genetically tractable hydrogenotrophic methanogen Methanococcus maripaludis.</title>
        <authorList>
            <person name="Hendrickson E.L."/>
            <person name="Kaul R."/>
            <person name="Zhou Y."/>
            <person name="Bovee D."/>
            <person name="Chapman P."/>
            <person name="Chung J."/>
            <person name="Conway de Macario E."/>
            <person name="Dodsworth J.A."/>
            <person name="Gillett W."/>
            <person name="Graham D.E."/>
            <person name="Hackett M."/>
            <person name="Haydock A.K."/>
            <person name="Kang A."/>
            <person name="Land M.L."/>
            <person name="Levy R."/>
            <person name="Lie T.J."/>
            <person name="Major T.A."/>
            <person name="Moore B.C."/>
            <person name="Porat I."/>
            <person name="Palmeiri A."/>
            <person name="Rouse G."/>
            <person name="Saenphimmachak C."/>
            <person name="Soell D."/>
            <person name="Van Dien S."/>
            <person name="Wang T."/>
            <person name="Whitman W.B."/>
            <person name="Xia Q."/>
            <person name="Zhang Y."/>
            <person name="Larimer F.W."/>
            <person name="Olson M.V."/>
            <person name="Leigh J.A."/>
        </authorList>
    </citation>
    <scope>NUCLEOTIDE SEQUENCE [LARGE SCALE GENOMIC DNA]</scope>
    <source>
        <strain>DSM 14266 / JCM 13030 / NBRC 101832 / S2 / LL</strain>
    </source>
</reference>
<comment type="similarity">
    <text evidence="1">Belongs to the UPF0248 family.</text>
</comment>
<gene>
    <name type="ordered locus">MMP0286</name>
</gene>
<dbReference type="EMBL" id="BX950229">
    <property type="protein sequence ID" value="CAF29842.1"/>
    <property type="molecule type" value="Genomic_DNA"/>
</dbReference>
<dbReference type="RefSeq" id="WP_011170230.1">
    <property type="nucleotide sequence ID" value="NC_005791.1"/>
</dbReference>
<dbReference type="STRING" id="267377.MMP0286"/>
<dbReference type="EnsemblBacteria" id="CAF29842">
    <property type="protein sequence ID" value="CAF29842"/>
    <property type="gene ID" value="MMP0286"/>
</dbReference>
<dbReference type="KEGG" id="mmp:MMP0286"/>
<dbReference type="PATRIC" id="fig|267377.15.peg.289"/>
<dbReference type="eggNOG" id="arCOG01302">
    <property type="taxonomic scope" value="Archaea"/>
</dbReference>
<dbReference type="HOGENOM" id="CLU_172276_3_1_2"/>
<dbReference type="OrthoDB" id="14794at2157"/>
<dbReference type="Proteomes" id="UP000000590">
    <property type="component" value="Chromosome"/>
</dbReference>
<dbReference type="HAMAP" id="MF_01245">
    <property type="entry name" value="UPF0248"/>
    <property type="match status" value="1"/>
</dbReference>
<dbReference type="InterPro" id="IPR040459">
    <property type="entry name" value="MJ1316"/>
</dbReference>
<dbReference type="InterPro" id="IPR007547">
    <property type="entry name" value="UPF0248"/>
</dbReference>
<dbReference type="NCBIfam" id="NF003272">
    <property type="entry name" value="PRK04257.1"/>
    <property type="match status" value="1"/>
</dbReference>
<dbReference type="Pfam" id="PF04457">
    <property type="entry name" value="MJ1316"/>
    <property type="match status" value="1"/>
</dbReference>
<accession>Q6M0I4</accession>
<protein>
    <recommendedName>
        <fullName evidence="1">UPF0248 protein MMP0286</fullName>
    </recommendedName>
</protein>
<organism>
    <name type="scientific">Methanococcus maripaludis (strain DSM 14266 / JCM 13030 / NBRC 101832 / S2 / LL)</name>
    <dbReference type="NCBI Taxonomy" id="267377"/>
    <lineage>
        <taxon>Archaea</taxon>
        <taxon>Methanobacteriati</taxon>
        <taxon>Methanobacteriota</taxon>
        <taxon>Methanomada group</taxon>
        <taxon>Methanococci</taxon>
        <taxon>Methanococcales</taxon>
        <taxon>Methanococcaceae</taxon>
        <taxon>Methanococcus</taxon>
    </lineage>
</organism>
<sequence length="76" mass="9122">MLKELINKLLWHPDYNPEDYIINYLHRGAENDEKSVPLKNIVIEDSFLVFDETHIPFHRILEIVNTKTGEIIYKKR</sequence>
<feature type="chain" id="PRO_0000053415" description="UPF0248 protein MMP0286">
    <location>
        <begin position="1"/>
        <end position="76"/>
    </location>
</feature>
<proteinExistence type="inferred from homology"/>
<evidence type="ECO:0000255" key="1">
    <source>
        <dbReference type="HAMAP-Rule" id="MF_01245"/>
    </source>
</evidence>